<gene>
    <name evidence="1" type="primary">pheS</name>
    <name type="ordered locus">MS1091</name>
</gene>
<dbReference type="EC" id="6.1.1.20" evidence="1"/>
<dbReference type="EMBL" id="AE016827">
    <property type="protein sequence ID" value="AAU37698.1"/>
    <property type="molecule type" value="Genomic_DNA"/>
</dbReference>
<dbReference type="RefSeq" id="WP_011200266.1">
    <property type="nucleotide sequence ID" value="NC_006300.1"/>
</dbReference>
<dbReference type="SMR" id="Q65TL2"/>
<dbReference type="STRING" id="221988.MS1091"/>
<dbReference type="KEGG" id="msu:MS1091"/>
<dbReference type="eggNOG" id="COG0016">
    <property type="taxonomic scope" value="Bacteria"/>
</dbReference>
<dbReference type="HOGENOM" id="CLU_025086_0_1_6"/>
<dbReference type="OrthoDB" id="9800719at2"/>
<dbReference type="Proteomes" id="UP000000607">
    <property type="component" value="Chromosome"/>
</dbReference>
<dbReference type="GO" id="GO:0005737">
    <property type="term" value="C:cytoplasm"/>
    <property type="evidence" value="ECO:0007669"/>
    <property type="project" value="UniProtKB-SubCell"/>
</dbReference>
<dbReference type="GO" id="GO:0005524">
    <property type="term" value="F:ATP binding"/>
    <property type="evidence" value="ECO:0007669"/>
    <property type="project" value="UniProtKB-UniRule"/>
</dbReference>
<dbReference type="GO" id="GO:0000287">
    <property type="term" value="F:magnesium ion binding"/>
    <property type="evidence" value="ECO:0007669"/>
    <property type="project" value="UniProtKB-UniRule"/>
</dbReference>
<dbReference type="GO" id="GO:0004826">
    <property type="term" value="F:phenylalanine-tRNA ligase activity"/>
    <property type="evidence" value="ECO:0007669"/>
    <property type="project" value="UniProtKB-UniRule"/>
</dbReference>
<dbReference type="GO" id="GO:0000049">
    <property type="term" value="F:tRNA binding"/>
    <property type="evidence" value="ECO:0007669"/>
    <property type="project" value="InterPro"/>
</dbReference>
<dbReference type="GO" id="GO:0006432">
    <property type="term" value="P:phenylalanyl-tRNA aminoacylation"/>
    <property type="evidence" value="ECO:0007669"/>
    <property type="project" value="UniProtKB-UniRule"/>
</dbReference>
<dbReference type="CDD" id="cd00496">
    <property type="entry name" value="PheRS_alpha_core"/>
    <property type="match status" value="1"/>
</dbReference>
<dbReference type="FunFam" id="3.30.930.10:FF:000003">
    <property type="entry name" value="Phenylalanine--tRNA ligase alpha subunit"/>
    <property type="match status" value="1"/>
</dbReference>
<dbReference type="Gene3D" id="3.30.930.10">
    <property type="entry name" value="Bira Bifunctional Protein, Domain 2"/>
    <property type="match status" value="1"/>
</dbReference>
<dbReference type="HAMAP" id="MF_00281">
    <property type="entry name" value="Phe_tRNA_synth_alpha1"/>
    <property type="match status" value="1"/>
</dbReference>
<dbReference type="InterPro" id="IPR006195">
    <property type="entry name" value="aa-tRNA-synth_II"/>
</dbReference>
<dbReference type="InterPro" id="IPR045864">
    <property type="entry name" value="aa-tRNA-synth_II/BPL/LPL"/>
</dbReference>
<dbReference type="InterPro" id="IPR004529">
    <property type="entry name" value="Phe-tRNA-synth_IIc_asu"/>
</dbReference>
<dbReference type="InterPro" id="IPR004188">
    <property type="entry name" value="Phe-tRNA_ligase_II_N"/>
</dbReference>
<dbReference type="InterPro" id="IPR022911">
    <property type="entry name" value="Phe_tRNA_ligase_alpha1_bac"/>
</dbReference>
<dbReference type="InterPro" id="IPR002319">
    <property type="entry name" value="Phenylalanyl-tRNA_Synthase"/>
</dbReference>
<dbReference type="InterPro" id="IPR010978">
    <property type="entry name" value="tRNA-bd_arm"/>
</dbReference>
<dbReference type="NCBIfam" id="TIGR00468">
    <property type="entry name" value="pheS"/>
    <property type="match status" value="1"/>
</dbReference>
<dbReference type="PANTHER" id="PTHR11538:SF41">
    <property type="entry name" value="PHENYLALANINE--TRNA LIGASE, MITOCHONDRIAL"/>
    <property type="match status" value="1"/>
</dbReference>
<dbReference type="PANTHER" id="PTHR11538">
    <property type="entry name" value="PHENYLALANYL-TRNA SYNTHETASE"/>
    <property type="match status" value="1"/>
</dbReference>
<dbReference type="Pfam" id="PF02912">
    <property type="entry name" value="Phe_tRNA-synt_N"/>
    <property type="match status" value="1"/>
</dbReference>
<dbReference type="Pfam" id="PF01409">
    <property type="entry name" value="tRNA-synt_2d"/>
    <property type="match status" value="1"/>
</dbReference>
<dbReference type="SUPFAM" id="SSF55681">
    <property type="entry name" value="Class II aaRS and biotin synthetases"/>
    <property type="match status" value="1"/>
</dbReference>
<dbReference type="SUPFAM" id="SSF46589">
    <property type="entry name" value="tRNA-binding arm"/>
    <property type="match status" value="1"/>
</dbReference>
<dbReference type="PROSITE" id="PS50862">
    <property type="entry name" value="AA_TRNA_LIGASE_II"/>
    <property type="match status" value="1"/>
</dbReference>
<proteinExistence type="inferred from homology"/>
<protein>
    <recommendedName>
        <fullName evidence="1">Phenylalanine--tRNA ligase alpha subunit</fullName>
        <ecNumber evidence="1">6.1.1.20</ecNumber>
    </recommendedName>
    <alternativeName>
        <fullName evidence="1">Phenylalanyl-tRNA synthetase alpha subunit</fullName>
        <shortName evidence="1">PheRS</shortName>
    </alternativeName>
</protein>
<comment type="catalytic activity">
    <reaction evidence="1">
        <text>tRNA(Phe) + L-phenylalanine + ATP = L-phenylalanyl-tRNA(Phe) + AMP + diphosphate + H(+)</text>
        <dbReference type="Rhea" id="RHEA:19413"/>
        <dbReference type="Rhea" id="RHEA-COMP:9668"/>
        <dbReference type="Rhea" id="RHEA-COMP:9699"/>
        <dbReference type="ChEBI" id="CHEBI:15378"/>
        <dbReference type="ChEBI" id="CHEBI:30616"/>
        <dbReference type="ChEBI" id="CHEBI:33019"/>
        <dbReference type="ChEBI" id="CHEBI:58095"/>
        <dbReference type="ChEBI" id="CHEBI:78442"/>
        <dbReference type="ChEBI" id="CHEBI:78531"/>
        <dbReference type="ChEBI" id="CHEBI:456215"/>
        <dbReference type="EC" id="6.1.1.20"/>
    </reaction>
</comment>
<comment type="cofactor">
    <cofactor evidence="1">
        <name>Mg(2+)</name>
        <dbReference type="ChEBI" id="CHEBI:18420"/>
    </cofactor>
    <text evidence="1">Binds 2 magnesium ions per tetramer.</text>
</comment>
<comment type="subunit">
    <text evidence="1">Tetramer of two alpha and two beta subunits.</text>
</comment>
<comment type="subcellular location">
    <subcellularLocation>
        <location evidence="1">Cytoplasm</location>
    </subcellularLocation>
</comment>
<comment type="similarity">
    <text evidence="1">Belongs to the class-II aminoacyl-tRNA synthetase family. Phe-tRNA synthetase alpha subunit type 1 subfamily.</text>
</comment>
<reference key="1">
    <citation type="journal article" date="2004" name="Nat. Biotechnol.">
        <title>The genome sequence of the capnophilic rumen bacterium Mannheimia succiniciproducens.</title>
        <authorList>
            <person name="Hong S.H."/>
            <person name="Kim J.S."/>
            <person name="Lee S.Y."/>
            <person name="In Y.H."/>
            <person name="Choi S.S."/>
            <person name="Rih J.-K."/>
            <person name="Kim C.H."/>
            <person name="Jeong H."/>
            <person name="Hur C.G."/>
            <person name="Kim J.J."/>
        </authorList>
    </citation>
    <scope>NUCLEOTIDE SEQUENCE [LARGE SCALE GENOMIC DNA]</scope>
    <source>
        <strain>KCTC 0769BP / MBEL55E</strain>
    </source>
</reference>
<accession>Q65TL2</accession>
<keyword id="KW-0030">Aminoacyl-tRNA synthetase</keyword>
<keyword id="KW-0067">ATP-binding</keyword>
<keyword id="KW-0963">Cytoplasm</keyword>
<keyword id="KW-0436">Ligase</keyword>
<keyword id="KW-0460">Magnesium</keyword>
<keyword id="KW-0479">Metal-binding</keyword>
<keyword id="KW-0547">Nucleotide-binding</keyword>
<keyword id="KW-0648">Protein biosynthesis</keyword>
<feature type="chain" id="PRO_0000126726" description="Phenylalanine--tRNA ligase alpha subunit">
    <location>
        <begin position="1"/>
        <end position="329"/>
    </location>
</feature>
<feature type="binding site" evidence="1">
    <location>
        <position position="254"/>
    </location>
    <ligand>
        <name>Mg(2+)</name>
        <dbReference type="ChEBI" id="CHEBI:18420"/>
        <note>shared with beta subunit</note>
    </ligand>
</feature>
<sequence>MQNLKEITEQARAALDELHDKGLDALEAFRVEYFGKKGHFTQLMQSLRNVAAEERPAVGAKINEAKQAVLDILNAKKEAFEKAALNAQLEKERIDVSLPGRKVELGGLHPVSLTIERVTKFFSELGFSVESGPEIESDYYNFDALNIPKHHPARADHDTFWFNPELLLRTQTSGVQIRTMEKKQPPIRIMVPGKVYRNDYDQTHTPMFHQIELLYEDKKVNFTELKGVLYDFLRAFFEEDLQVRFRPSYFPFTEPSAEVDIMGKNGKWLEVLGCGMVHPNVLRSVGIDPNEYSGFAAGMGVERLTMLRYNVTDLRSFFENDLRFLKQFK</sequence>
<organism>
    <name type="scientific">Mannheimia succiniciproducens (strain KCTC 0769BP / MBEL55E)</name>
    <dbReference type="NCBI Taxonomy" id="221988"/>
    <lineage>
        <taxon>Bacteria</taxon>
        <taxon>Pseudomonadati</taxon>
        <taxon>Pseudomonadota</taxon>
        <taxon>Gammaproteobacteria</taxon>
        <taxon>Pasteurellales</taxon>
        <taxon>Pasteurellaceae</taxon>
        <taxon>Basfia</taxon>
    </lineage>
</organism>
<evidence type="ECO:0000255" key="1">
    <source>
        <dbReference type="HAMAP-Rule" id="MF_00281"/>
    </source>
</evidence>
<name>SYFA_MANSM</name>